<feature type="signal peptide" evidence="1">
    <location>
        <begin position="1"/>
        <end position="19"/>
    </location>
</feature>
<feature type="chain" id="PRO_0000428921" description="Lectin-like protein At3g16530">
    <location>
        <begin position="20"/>
        <end position="276"/>
    </location>
</feature>
<feature type="region of interest" description="Legume-lectin like">
    <location>
        <begin position="20"/>
        <end position="270"/>
    </location>
</feature>
<feature type="glycosylation site" description="N-linked (GlcNAc...) asparagine" evidence="1">
    <location>
        <position position="79"/>
    </location>
</feature>
<feature type="glycosylation site" description="N-linked (GlcNAc...) asparagine" evidence="1">
    <location>
        <position position="129"/>
    </location>
</feature>
<feature type="glycosylation site" description="N-linked (GlcNAc...) asparagine" evidence="1">
    <location>
        <position position="196"/>
    </location>
</feature>
<sequence length="276" mass="30509">MQIHKLCFLVLFLANAAFAVKFNFDSFDGSNLLFLGDAELGPSSDGVSRSGALSMTRDENPFSHGQGLYINQIPFKPSNTSSPFSFETSFTFSITPRTKPNSGQGFAFIITPEADNSGASDGGYLGILNKTNDGKPENHILAIEFDTFQNKEFLDISGNHVGVNINSMTSLVAEKAGYWVQTRVGKRKVWSFKDVNLSSGERFKAWVEFRNKDSTITVTLAPENVKKPKRALIEAPRVLNEVLLQNMYAGFAGSMGRAVERHDIWSWSFENAAKNN</sequence>
<reference key="1">
    <citation type="journal article" date="2000" name="DNA Res.">
        <title>Structural analysis of Arabidopsis thaliana chromosome 3. II. Sequence features of the 4,251,695 bp regions covered by 90 P1, TAC and BAC clones.</title>
        <authorList>
            <person name="Kaneko T."/>
            <person name="Katoh T."/>
            <person name="Sato S."/>
            <person name="Nakamura Y."/>
            <person name="Asamizu E."/>
            <person name="Tabata S."/>
        </authorList>
    </citation>
    <scope>NUCLEOTIDE SEQUENCE [LARGE SCALE GENOMIC DNA]</scope>
    <source>
        <strain>cv. Columbia</strain>
    </source>
</reference>
<reference key="2">
    <citation type="journal article" date="2017" name="Plant J.">
        <title>Araport11: a complete reannotation of the Arabidopsis thaliana reference genome.</title>
        <authorList>
            <person name="Cheng C.Y."/>
            <person name="Krishnakumar V."/>
            <person name="Chan A.P."/>
            <person name="Thibaud-Nissen F."/>
            <person name="Schobel S."/>
            <person name="Town C.D."/>
        </authorList>
    </citation>
    <scope>GENOME REANNOTATION</scope>
    <source>
        <strain>cv. Columbia</strain>
    </source>
</reference>
<reference key="3">
    <citation type="journal article" date="2003" name="Science">
        <title>Empirical analysis of transcriptional activity in the Arabidopsis genome.</title>
        <authorList>
            <person name="Yamada K."/>
            <person name="Lim J."/>
            <person name="Dale J.M."/>
            <person name="Chen H."/>
            <person name="Shinn P."/>
            <person name="Palm C.J."/>
            <person name="Southwick A.M."/>
            <person name="Wu H.C."/>
            <person name="Kim C.J."/>
            <person name="Nguyen M."/>
            <person name="Pham P.K."/>
            <person name="Cheuk R.F."/>
            <person name="Karlin-Newmann G."/>
            <person name="Liu S.X."/>
            <person name="Lam B."/>
            <person name="Sakano H."/>
            <person name="Wu T."/>
            <person name="Yu G."/>
            <person name="Miranda M."/>
            <person name="Quach H.L."/>
            <person name="Tripp M."/>
            <person name="Chang C.H."/>
            <person name="Lee J.M."/>
            <person name="Toriumi M.J."/>
            <person name="Chan M.M."/>
            <person name="Tang C.C."/>
            <person name="Onodera C.S."/>
            <person name="Deng J.M."/>
            <person name="Akiyama K."/>
            <person name="Ansari Y."/>
            <person name="Arakawa T."/>
            <person name="Banh J."/>
            <person name="Banno F."/>
            <person name="Bowser L."/>
            <person name="Brooks S.Y."/>
            <person name="Carninci P."/>
            <person name="Chao Q."/>
            <person name="Choy N."/>
            <person name="Enju A."/>
            <person name="Goldsmith A.D."/>
            <person name="Gurjal M."/>
            <person name="Hansen N.F."/>
            <person name="Hayashizaki Y."/>
            <person name="Johnson-Hopson C."/>
            <person name="Hsuan V.W."/>
            <person name="Iida K."/>
            <person name="Karnes M."/>
            <person name="Khan S."/>
            <person name="Koesema E."/>
            <person name="Ishida J."/>
            <person name="Jiang P.X."/>
            <person name="Jones T."/>
            <person name="Kawai J."/>
            <person name="Kamiya A."/>
            <person name="Meyers C."/>
            <person name="Nakajima M."/>
            <person name="Narusaka M."/>
            <person name="Seki M."/>
            <person name="Sakurai T."/>
            <person name="Satou M."/>
            <person name="Tamse R."/>
            <person name="Vaysberg M."/>
            <person name="Wallender E.K."/>
            <person name="Wong C."/>
            <person name="Yamamura Y."/>
            <person name="Yuan S."/>
            <person name="Shinozaki K."/>
            <person name="Davis R.W."/>
            <person name="Theologis A."/>
            <person name="Ecker J.R."/>
        </authorList>
    </citation>
    <scope>NUCLEOTIDE SEQUENCE [LARGE SCALE MRNA]</scope>
    <source>
        <strain>cv. Columbia</strain>
    </source>
</reference>
<reference key="4">
    <citation type="journal article" date="2002" name="Mol. Plant Microbe Interact.">
        <title>Characterization of early, chitin-induced gene expression in Arabidopsis.</title>
        <authorList>
            <person name="Zhang B."/>
            <person name="Ramonell K."/>
            <person name="Somerville S."/>
            <person name="Stacey G."/>
        </authorList>
    </citation>
    <scope>INDUCTION BY CHITIN</scope>
</reference>
<reference key="5">
    <citation type="journal article" date="2008" name="Proteomics">
        <title>Identification by 2-D DIGE of apoplastic proteins regulated by oligogalacturonides in Arabidopsis thaliana.</title>
        <authorList>
            <person name="Casasoli M."/>
            <person name="Spadoni S."/>
            <person name="Lilley K.S."/>
            <person name="Cervone F."/>
            <person name="De Lorenzo G."/>
            <person name="Mattei B."/>
        </authorList>
    </citation>
    <scope>SUBCELLULAR LOCATION</scope>
    <scope>INDUCTION BY OLIGOGALACTURONIDES</scope>
    <scope>IDENTIFICATION BY MASS SPECTROMETRY</scope>
</reference>
<reference key="6">
    <citation type="journal article" date="2005" name="Plant Physiol.">
        <title>Loss-of-function mutations in chitin responsive genes show increased susceptibility to the powdery mildew pathogen Erysiphe cichoracearum.</title>
        <authorList>
            <person name="Ramonell K."/>
            <person name="Berrocal-Lobo M."/>
            <person name="Koh S."/>
            <person name="Wan J."/>
            <person name="Edwards H."/>
            <person name="Stacey G."/>
            <person name="Somerville S."/>
        </authorList>
    </citation>
    <scope>INDUCTION BY CHITIN</scope>
    <source>
        <strain>cv. Columbia</strain>
    </source>
</reference>
<reference key="7">
    <citation type="journal article" date="2011" name="Plant Cell Environ.">
        <title>An Arabidopsis (malectin-like) leucine-rich repeat receptor-like kinase contributes to downy mildew disease.</title>
        <authorList>
            <person name="Hok S."/>
            <person name="Danchin E.G."/>
            <person name="Allasia V."/>
            <person name="Panabieres F."/>
            <person name="Attard A."/>
            <person name="Keller H."/>
        </authorList>
    </citation>
    <scope>INDUCTION BY HYALOPERONOSPORA ARABIDOPSIDIS</scope>
</reference>
<evidence type="ECO:0000255" key="1"/>
<evidence type="ECO:0000269" key="2">
    <source>
    </source>
</evidence>
<evidence type="ECO:0000269" key="3">
    <source>
    </source>
</evidence>
<evidence type="ECO:0000269" key="4">
    <source>
    </source>
</evidence>
<evidence type="ECO:0000269" key="5">
    <source>
    </source>
</evidence>
<evidence type="ECO:0000305" key="6"/>
<comment type="subcellular location">
    <subcellularLocation>
        <location evidence="4">Secreted</location>
        <location evidence="4">Extracellular space</location>
        <location evidence="4">Apoplast</location>
    </subcellularLocation>
</comment>
<comment type="induction">
    <text evidence="2 3 4 5">By oligogalacturonides and chitin (e.g. chito-octamer and crab-shell chitin CSC). Accumulates upon Hyaloperonospora arabidopsidis infection, during both early and late stages of infection.</text>
</comment>
<comment type="similarity">
    <text evidence="6">Belongs to the leguminous lectin family.</text>
</comment>
<name>LECT5_ARATH</name>
<organism>
    <name type="scientific">Arabidopsis thaliana</name>
    <name type="common">Mouse-ear cress</name>
    <dbReference type="NCBI Taxonomy" id="3702"/>
    <lineage>
        <taxon>Eukaryota</taxon>
        <taxon>Viridiplantae</taxon>
        <taxon>Streptophyta</taxon>
        <taxon>Embryophyta</taxon>
        <taxon>Tracheophyta</taxon>
        <taxon>Spermatophyta</taxon>
        <taxon>Magnoliopsida</taxon>
        <taxon>eudicotyledons</taxon>
        <taxon>Gunneridae</taxon>
        <taxon>Pentapetalae</taxon>
        <taxon>rosids</taxon>
        <taxon>malvids</taxon>
        <taxon>Brassicales</taxon>
        <taxon>Brassicaceae</taxon>
        <taxon>Camelineae</taxon>
        <taxon>Arabidopsis</taxon>
    </lineage>
</organism>
<proteinExistence type="evidence at protein level"/>
<gene>
    <name type="ordered locus">At3g16530</name>
    <name type="ORF">MDC8.16</name>
</gene>
<keyword id="KW-0052">Apoplast</keyword>
<keyword id="KW-0325">Glycoprotein</keyword>
<keyword id="KW-0430">Lectin</keyword>
<keyword id="KW-1185">Reference proteome</keyword>
<keyword id="KW-0964">Secreted</keyword>
<keyword id="KW-0732">Signal</keyword>
<accession>Q9LK72</accession>
<protein>
    <recommendedName>
        <fullName>Lectin-like protein At3g16530</fullName>
    </recommendedName>
</protein>
<dbReference type="EMBL" id="AP000373">
    <property type="protein sequence ID" value="BAB01152.1"/>
    <property type="molecule type" value="Genomic_DNA"/>
</dbReference>
<dbReference type="EMBL" id="CP002686">
    <property type="protein sequence ID" value="AEE75832.1"/>
    <property type="molecule type" value="Genomic_DNA"/>
</dbReference>
<dbReference type="EMBL" id="AF428361">
    <property type="protein sequence ID" value="AAL16291.1"/>
    <property type="molecule type" value="mRNA"/>
</dbReference>
<dbReference type="EMBL" id="AY054194">
    <property type="protein sequence ID" value="AAL06855.1"/>
    <property type="molecule type" value="mRNA"/>
</dbReference>
<dbReference type="EMBL" id="AY066032">
    <property type="protein sequence ID" value="AAL47399.1"/>
    <property type="molecule type" value="mRNA"/>
</dbReference>
<dbReference type="RefSeq" id="NP_188274.1">
    <property type="nucleotide sequence ID" value="NM_112525.3"/>
</dbReference>
<dbReference type="SMR" id="Q9LK72"/>
<dbReference type="BioGRID" id="6235">
    <property type="interactions" value="2"/>
</dbReference>
<dbReference type="FunCoup" id="Q9LK72">
    <property type="interactions" value="7"/>
</dbReference>
<dbReference type="IntAct" id="Q9LK72">
    <property type="interactions" value="1"/>
</dbReference>
<dbReference type="STRING" id="3702.Q9LK72"/>
<dbReference type="GlyGen" id="Q9LK72">
    <property type="glycosylation" value="3 sites"/>
</dbReference>
<dbReference type="PaxDb" id="3702-AT3G16530.1"/>
<dbReference type="ProteomicsDB" id="238454"/>
<dbReference type="EnsemblPlants" id="AT3G16530.1">
    <property type="protein sequence ID" value="AT3G16530.1"/>
    <property type="gene ID" value="AT3G16530"/>
</dbReference>
<dbReference type="GeneID" id="820901"/>
<dbReference type="Gramene" id="AT3G16530.1">
    <property type="protein sequence ID" value="AT3G16530.1"/>
    <property type="gene ID" value="AT3G16530"/>
</dbReference>
<dbReference type="KEGG" id="ath:AT3G16530"/>
<dbReference type="Araport" id="AT3G16530"/>
<dbReference type="TAIR" id="AT3G16530"/>
<dbReference type="eggNOG" id="ENOG502QRZ3">
    <property type="taxonomic scope" value="Eukaryota"/>
</dbReference>
<dbReference type="HOGENOM" id="CLU_000288_62_2_1"/>
<dbReference type="InParanoid" id="Q9LK72"/>
<dbReference type="OMA" id="NGREANV"/>
<dbReference type="PhylomeDB" id="Q9LK72"/>
<dbReference type="CD-CODE" id="4299E36E">
    <property type="entry name" value="Nucleolus"/>
</dbReference>
<dbReference type="PRO" id="PR:Q9LK72"/>
<dbReference type="Proteomes" id="UP000006548">
    <property type="component" value="Chromosome 3"/>
</dbReference>
<dbReference type="ExpressionAtlas" id="Q9LK72">
    <property type="expression patterns" value="baseline and differential"/>
</dbReference>
<dbReference type="GO" id="GO:0048046">
    <property type="term" value="C:apoplast"/>
    <property type="evidence" value="ECO:0007005"/>
    <property type="project" value="TAIR"/>
</dbReference>
<dbReference type="GO" id="GO:0005829">
    <property type="term" value="C:cytosol"/>
    <property type="evidence" value="ECO:0007005"/>
    <property type="project" value="TAIR"/>
</dbReference>
<dbReference type="GO" id="GO:0005634">
    <property type="term" value="C:nucleus"/>
    <property type="evidence" value="ECO:0007005"/>
    <property type="project" value="TAIR"/>
</dbReference>
<dbReference type="GO" id="GO:0030246">
    <property type="term" value="F:carbohydrate binding"/>
    <property type="evidence" value="ECO:0007669"/>
    <property type="project" value="UniProtKB-KW"/>
</dbReference>
<dbReference type="GO" id="GO:0010200">
    <property type="term" value="P:response to chitin"/>
    <property type="evidence" value="ECO:0000270"/>
    <property type="project" value="TAIR"/>
</dbReference>
<dbReference type="GO" id="GO:0002239">
    <property type="term" value="P:response to oomycetes"/>
    <property type="evidence" value="ECO:0000270"/>
    <property type="project" value="UniProtKB"/>
</dbReference>
<dbReference type="CDD" id="cd06899">
    <property type="entry name" value="lectin_legume_LecRK_Arcelin_ConA"/>
    <property type="match status" value="1"/>
</dbReference>
<dbReference type="FunFam" id="2.60.120.200:FF:000236">
    <property type="entry name" value="Legume lectin family protein"/>
    <property type="match status" value="1"/>
</dbReference>
<dbReference type="Gene3D" id="2.60.120.200">
    <property type="match status" value="1"/>
</dbReference>
<dbReference type="InterPro" id="IPR013320">
    <property type="entry name" value="ConA-like_dom_sf"/>
</dbReference>
<dbReference type="InterPro" id="IPR016363">
    <property type="entry name" value="L-lectin"/>
</dbReference>
<dbReference type="InterPro" id="IPR001220">
    <property type="entry name" value="Legume_lectin_dom"/>
</dbReference>
<dbReference type="InterPro" id="IPR050258">
    <property type="entry name" value="Leguminous_Lectin"/>
</dbReference>
<dbReference type="PANTHER" id="PTHR32401">
    <property type="entry name" value="CONCANAVALIN A-LIKE LECTIN FAMILY PROTEIN"/>
    <property type="match status" value="1"/>
</dbReference>
<dbReference type="PANTHER" id="PTHR32401:SF34">
    <property type="entry name" value="LECTIN-LIKE PROTEIN LEC"/>
    <property type="match status" value="1"/>
</dbReference>
<dbReference type="Pfam" id="PF00139">
    <property type="entry name" value="Lectin_legB"/>
    <property type="match status" value="1"/>
</dbReference>
<dbReference type="PIRSF" id="PIRSF002690">
    <property type="entry name" value="L-type_lectin_plant"/>
    <property type="match status" value="1"/>
</dbReference>
<dbReference type="SUPFAM" id="SSF49899">
    <property type="entry name" value="Concanavalin A-like lectins/glucanases"/>
    <property type="match status" value="1"/>
</dbReference>